<protein>
    <recommendedName>
        <fullName>Cytochrome b</fullName>
    </recommendedName>
    <alternativeName>
        <fullName>Complex III subunit 3</fullName>
    </alternativeName>
    <alternativeName>
        <fullName>Complex III subunit III</fullName>
    </alternativeName>
    <alternativeName>
        <fullName>Cytochrome b-c1 complex subunit 3</fullName>
    </alternativeName>
    <alternativeName>
        <fullName>Ubiquinol-cytochrome-c reductase complex cytochrome b subunit</fullName>
    </alternativeName>
</protein>
<gene>
    <name type="primary">MT-CYB</name>
    <name type="synonym">COB</name>
    <name type="synonym">CYTB</name>
    <name type="synonym">MTCYB</name>
</gene>
<proteinExistence type="inferred from homology"/>
<keyword id="KW-0249">Electron transport</keyword>
<keyword id="KW-0349">Heme</keyword>
<keyword id="KW-0408">Iron</keyword>
<keyword id="KW-0472">Membrane</keyword>
<keyword id="KW-0479">Metal-binding</keyword>
<keyword id="KW-0496">Mitochondrion</keyword>
<keyword id="KW-0999">Mitochondrion inner membrane</keyword>
<keyword id="KW-0679">Respiratory chain</keyword>
<keyword id="KW-0812">Transmembrane</keyword>
<keyword id="KW-1133">Transmembrane helix</keyword>
<keyword id="KW-0813">Transport</keyword>
<keyword id="KW-0830">Ubiquinone</keyword>
<accession>O78858</accession>
<feature type="chain" id="PRO_0000061072" description="Cytochrome b">
    <location>
        <begin position="1"/>
        <end position="379"/>
    </location>
</feature>
<feature type="transmembrane region" description="Helical" evidence="2">
    <location>
        <begin position="33"/>
        <end position="53"/>
    </location>
</feature>
<feature type="transmembrane region" description="Helical" evidence="2">
    <location>
        <begin position="77"/>
        <end position="98"/>
    </location>
</feature>
<feature type="transmembrane region" description="Helical" evidence="2">
    <location>
        <begin position="113"/>
        <end position="133"/>
    </location>
</feature>
<feature type="transmembrane region" description="Helical" evidence="2">
    <location>
        <begin position="178"/>
        <end position="198"/>
    </location>
</feature>
<feature type="transmembrane region" description="Helical" evidence="2">
    <location>
        <begin position="226"/>
        <end position="246"/>
    </location>
</feature>
<feature type="transmembrane region" description="Helical" evidence="2">
    <location>
        <begin position="288"/>
        <end position="308"/>
    </location>
</feature>
<feature type="transmembrane region" description="Helical" evidence="2">
    <location>
        <begin position="320"/>
        <end position="340"/>
    </location>
</feature>
<feature type="transmembrane region" description="Helical" evidence="2">
    <location>
        <begin position="347"/>
        <end position="367"/>
    </location>
</feature>
<feature type="binding site" description="axial binding residue" evidence="2">
    <location>
        <position position="83"/>
    </location>
    <ligand>
        <name>heme b</name>
        <dbReference type="ChEBI" id="CHEBI:60344"/>
        <label>b562</label>
    </ligand>
    <ligandPart>
        <name>Fe</name>
        <dbReference type="ChEBI" id="CHEBI:18248"/>
    </ligandPart>
</feature>
<feature type="binding site" description="axial binding residue" evidence="2">
    <location>
        <position position="97"/>
    </location>
    <ligand>
        <name>heme b</name>
        <dbReference type="ChEBI" id="CHEBI:60344"/>
        <label>b566</label>
    </ligand>
    <ligandPart>
        <name>Fe</name>
        <dbReference type="ChEBI" id="CHEBI:18248"/>
    </ligandPart>
</feature>
<feature type="binding site" description="axial binding residue" evidence="2">
    <location>
        <position position="182"/>
    </location>
    <ligand>
        <name>heme b</name>
        <dbReference type="ChEBI" id="CHEBI:60344"/>
        <label>b562</label>
    </ligand>
    <ligandPart>
        <name>Fe</name>
        <dbReference type="ChEBI" id="CHEBI:18248"/>
    </ligandPart>
</feature>
<feature type="binding site" description="axial binding residue" evidence="2">
    <location>
        <position position="196"/>
    </location>
    <ligand>
        <name>heme b</name>
        <dbReference type="ChEBI" id="CHEBI:60344"/>
        <label>b566</label>
    </ligand>
    <ligandPart>
        <name>Fe</name>
        <dbReference type="ChEBI" id="CHEBI:18248"/>
    </ligandPart>
</feature>
<feature type="binding site" evidence="2">
    <location>
        <position position="201"/>
    </location>
    <ligand>
        <name>a ubiquinone</name>
        <dbReference type="ChEBI" id="CHEBI:16389"/>
    </ligand>
</feature>
<name>CYB_KOBKO</name>
<comment type="function">
    <text evidence="2">Component of the ubiquinol-cytochrome c reductase complex (complex III or cytochrome b-c1 complex) that is part of the mitochondrial respiratory chain. The b-c1 complex mediates electron transfer from ubiquinol to cytochrome c. Contributes to the generation of a proton gradient across the mitochondrial membrane that is then used for ATP synthesis.</text>
</comment>
<comment type="cofactor">
    <cofactor evidence="2">
        <name>heme b</name>
        <dbReference type="ChEBI" id="CHEBI:60344"/>
    </cofactor>
    <text evidence="2">Binds 2 heme b groups non-covalently.</text>
</comment>
<comment type="subunit">
    <text evidence="2">The cytochrome bc1 complex contains 11 subunits: 3 respiratory subunits (MT-CYB, CYC1 and UQCRFS1), 2 core proteins (UQCRC1 and UQCRC2) and 6 low-molecular weight proteins (UQCRH/QCR6, UQCRB/QCR7, UQCRQ/QCR8, UQCR10/QCR9, UQCR11/QCR10 and a cleavage product of UQCRFS1). This cytochrome bc1 complex then forms a dimer.</text>
</comment>
<comment type="subcellular location">
    <subcellularLocation>
        <location evidence="2">Mitochondrion inner membrane</location>
        <topology evidence="2">Multi-pass membrane protein</topology>
    </subcellularLocation>
</comment>
<comment type="miscellaneous">
    <text evidence="1">Heme 1 (or BL or b562) is low-potential and absorbs at about 562 nm, and heme 2 (or BH or b566) is high-potential and absorbs at about 566 nm.</text>
</comment>
<comment type="similarity">
    <text evidence="3 4">Belongs to the cytochrome b family.</text>
</comment>
<comment type="caution">
    <text evidence="2">The full-length protein contains only eight transmembrane helices, not nine as predicted by bioinformatics tools.</text>
</comment>
<reference key="1">
    <citation type="journal article" date="1998" name="Mol. Ecol.">
        <title>DMSO-preserved samples as a source of mRNA for RT-PCR.</title>
        <authorList>
            <person name="Birungi J."/>
            <person name="Roy M.S."/>
            <person name="Arctander P."/>
        </authorList>
    </citation>
    <scope>NUCLEOTIDE SEQUENCE [GENOMIC DNA]</scope>
</reference>
<dbReference type="EMBL" id="AF052939">
    <property type="protein sequence ID" value="AAC69178.1"/>
    <property type="molecule type" value="Genomic_DNA"/>
</dbReference>
<dbReference type="SMR" id="O78858"/>
<dbReference type="GO" id="GO:0005743">
    <property type="term" value="C:mitochondrial inner membrane"/>
    <property type="evidence" value="ECO:0007669"/>
    <property type="project" value="UniProtKB-SubCell"/>
</dbReference>
<dbReference type="GO" id="GO:0045275">
    <property type="term" value="C:respiratory chain complex III"/>
    <property type="evidence" value="ECO:0007669"/>
    <property type="project" value="InterPro"/>
</dbReference>
<dbReference type="GO" id="GO:0046872">
    <property type="term" value="F:metal ion binding"/>
    <property type="evidence" value="ECO:0007669"/>
    <property type="project" value="UniProtKB-KW"/>
</dbReference>
<dbReference type="GO" id="GO:0008121">
    <property type="term" value="F:ubiquinol-cytochrome-c reductase activity"/>
    <property type="evidence" value="ECO:0007669"/>
    <property type="project" value="InterPro"/>
</dbReference>
<dbReference type="GO" id="GO:0006122">
    <property type="term" value="P:mitochondrial electron transport, ubiquinol to cytochrome c"/>
    <property type="evidence" value="ECO:0007669"/>
    <property type="project" value="TreeGrafter"/>
</dbReference>
<dbReference type="CDD" id="cd00290">
    <property type="entry name" value="cytochrome_b_C"/>
    <property type="match status" value="1"/>
</dbReference>
<dbReference type="CDD" id="cd00284">
    <property type="entry name" value="Cytochrome_b_N"/>
    <property type="match status" value="1"/>
</dbReference>
<dbReference type="FunFam" id="1.20.810.10:FF:000002">
    <property type="entry name" value="Cytochrome b"/>
    <property type="match status" value="1"/>
</dbReference>
<dbReference type="Gene3D" id="1.20.810.10">
    <property type="entry name" value="Cytochrome Bc1 Complex, Chain C"/>
    <property type="match status" value="1"/>
</dbReference>
<dbReference type="InterPro" id="IPR005798">
    <property type="entry name" value="Cyt_b/b6_C"/>
</dbReference>
<dbReference type="InterPro" id="IPR036150">
    <property type="entry name" value="Cyt_b/b6_C_sf"/>
</dbReference>
<dbReference type="InterPro" id="IPR005797">
    <property type="entry name" value="Cyt_b/b6_N"/>
</dbReference>
<dbReference type="InterPro" id="IPR027387">
    <property type="entry name" value="Cytb/b6-like_sf"/>
</dbReference>
<dbReference type="InterPro" id="IPR030689">
    <property type="entry name" value="Cytochrome_b"/>
</dbReference>
<dbReference type="InterPro" id="IPR048260">
    <property type="entry name" value="Cytochrome_b_C_euk/bac"/>
</dbReference>
<dbReference type="InterPro" id="IPR048259">
    <property type="entry name" value="Cytochrome_b_N_euk/bac"/>
</dbReference>
<dbReference type="InterPro" id="IPR016174">
    <property type="entry name" value="Di-haem_cyt_TM"/>
</dbReference>
<dbReference type="PANTHER" id="PTHR19271">
    <property type="entry name" value="CYTOCHROME B"/>
    <property type="match status" value="1"/>
</dbReference>
<dbReference type="PANTHER" id="PTHR19271:SF16">
    <property type="entry name" value="CYTOCHROME B"/>
    <property type="match status" value="1"/>
</dbReference>
<dbReference type="Pfam" id="PF00032">
    <property type="entry name" value="Cytochrom_B_C"/>
    <property type="match status" value="1"/>
</dbReference>
<dbReference type="Pfam" id="PF00033">
    <property type="entry name" value="Cytochrome_B"/>
    <property type="match status" value="1"/>
</dbReference>
<dbReference type="PIRSF" id="PIRSF038885">
    <property type="entry name" value="COB"/>
    <property type="match status" value="1"/>
</dbReference>
<dbReference type="SUPFAM" id="SSF81648">
    <property type="entry name" value="a domain/subunit of cytochrome bc1 complex (Ubiquinol-cytochrome c reductase)"/>
    <property type="match status" value="1"/>
</dbReference>
<dbReference type="SUPFAM" id="SSF81342">
    <property type="entry name" value="Transmembrane di-heme cytochromes"/>
    <property type="match status" value="1"/>
</dbReference>
<dbReference type="PROSITE" id="PS51003">
    <property type="entry name" value="CYTB_CTER"/>
    <property type="match status" value="1"/>
</dbReference>
<dbReference type="PROSITE" id="PS51002">
    <property type="entry name" value="CYTB_NTER"/>
    <property type="match status" value="1"/>
</dbReference>
<sequence length="379" mass="42863">MTNMRKTHPLMKIVNNAFIDLPAPSNISSWWNFGSLLGICLILQILTGLFLAMHYTSDTITAFSSVTHICRDVNYGWIIRYMHANGASMFFICLFMHVGRGLYYGSYIFLETWNIGVILLFMTMATAFMGYVLPWGQMSFWGATVITNLLSAIPYIGTNLVEWIWGGFSVDKATLTRFFAFHFILPFIIAAIAMVHLLFLHETGSNNPTGISSDTDKIPFHPYYTIKDTLGALLLILVLMLLVLFAPDLLGDPDNYTPANPLNTPPHIKPEWYFLFAYAILRSIPNKLGGVLALVLSILILVFMPLLHMSKQRSMMFRPISQCLFWILAADLLTLTWIGGQPVEHPYIIIGQLASIMYFLLILVLMPMASTIENNLLKW</sequence>
<evidence type="ECO:0000250" key="1"/>
<evidence type="ECO:0000250" key="2">
    <source>
        <dbReference type="UniProtKB" id="P00157"/>
    </source>
</evidence>
<evidence type="ECO:0000255" key="3">
    <source>
        <dbReference type="PROSITE-ProRule" id="PRU00967"/>
    </source>
</evidence>
<evidence type="ECO:0000255" key="4">
    <source>
        <dbReference type="PROSITE-ProRule" id="PRU00968"/>
    </source>
</evidence>
<organism>
    <name type="scientific">Kobus kob</name>
    <name type="common">Kob</name>
    <dbReference type="NCBI Taxonomy" id="59530"/>
    <lineage>
        <taxon>Eukaryota</taxon>
        <taxon>Metazoa</taxon>
        <taxon>Chordata</taxon>
        <taxon>Craniata</taxon>
        <taxon>Vertebrata</taxon>
        <taxon>Euteleostomi</taxon>
        <taxon>Mammalia</taxon>
        <taxon>Eutheria</taxon>
        <taxon>Laurasiatheria</taxon>
        <taxon>Artiodactyla</taxon>
        <taxon>Ruminantia</taxon>
        <taxon>Pecora</taxon>
        <taxon>Bovidae</taxon>
        <taxon>Reduncinae</taxon>
        <taxon>Kobus</taxon>
    </lineage>
</organism>
<geneLocation type="mitochondrion"/>